<name>TRMFO_SYNY3</name>
<dbReference type="EC" id="2.1.1.74" evidence="1"/>
<dbReference type="EMBL" id="BA000022">
    <property type="protein sequence ID" value="BAA10221.1"/>
    <property type="molecule type" value="Genomic_DNA"/>
</dbReference>
<dbReference type="PIR" id="S76369">
    <property type="entry name" value="S76369"/>
</dbReference>
<dbReference type="SMR" id="Q55692"/>
<dbReference type="FunCoup" id="Q55692">
    <property type="interactions" value="11"/>
</dbReference>
<dbReference type="IntAct" id="Q55692">
    <property type="interactions" value="1"/>
</dbReference>
<dbReference type="STRING" id="1148.gene:10499720"/>
<dbReference type="PaxDb" id="1148-1001593"/>
<dbReference type="EnsemblBacteria" id="BAA10221">
    <property type="protein sequence ID" value="BAA10221"/>
    <property type="gene ID" value="BAA10221"/>
</dbReference>
<dbReference type="KEGG" id="syn:sll0204"/>
<dbReference type="eggNOG" id="COG1206">
    <property type="taxonomic scope" value="Bacteria"/>
</dbReference>
<dbReference type="InParanoid" id="Q55692"/>
<dbReference type="PhylomeDB" id="Q55692"/>
<dbReference type="Proteomes" id="UP000001425">
    <property type="component" value="Chromosome"/>
</dbReference>
<dbReference type="GO" id="GO:0005829">
    <property type="term" value="C:cytosol"/>
    <property type="evidence" value="ECO:0000318"/>
    <property type="project" value="GO_Central"/>
</dbReference>
<dbReference type="GO" id="GO:0050660">
    <property type="term" value="F:flavin adenine dinucleotide binding"/>
    <property type="evidence" value="ECO:0000318"/>
    <property type="project" value="GO_Central"/>
</dbReference>
<dbReference type="GO" id="GO:0047151">
    <property type="term" value="F:tRNA (uracil(54)-C5)-methyltransferase activity, 5,10-methylenetetrahydrofolate-dependent"/>
    <property type="evidence" value="ECO:0007669"/>
    <property type="project" value="UniProtKB-UniRule"/>
</dbReference>
<dbReference type="GO" id="GO:0030488">
    <property type="term" value="P:tRNA methylation"/>
    <property type="evidence" value="ECO:0000318"/>
    <property type="project" value="GO_Central"/>
</dbReference>
<dbReference type="GO" id="GO:0002098">
    <property type="term" value="P:tRNA wobble uridine modification"/>
    <property type="evidence" value="ECO:0000318"/>
    <property type="project" value="GO_Central"/>
</dbReference>
<dbReference type="FunFam" id="3.50.50.60:FF:000035">
    <property type="entry name" value="Methylenetetrahydrofolate--tRNA-(uracil-5-)-methyltransferase TrmFO"/>
    <property type="match status" value="1"/>
</dbReference>
<dbReference type="FunFam" id="3.50.50.60:FF:000359">
    <property type="entry name" value="Methylenetetrahydrofolate--tRNA-(uracil-5-)-methyltransferase TrmFO"/>
    <property type="match status" value="1"/>
</dbReference>
<dbReference type="Gene3D" id="3.50.50.60">
    <property type="entry name" value="FAD/NAD(P)-binding domain"/>
    <property type="match status" value="2"/>
</dbReference>
<dbReference type="HAMAP" id="MF_01037">
    <property type="entry name" value="TrmFO"/>
    <property type="match status" value="1"/>
</dbReference>
<dbReference type="InterPro" id="IPR036188">
    <property type="entry name" value="FAD/NAD-bd_sf"/>
</dbReference>
<dbReference type="InterPro" id="IPR002218">
    <property type="entry name" value="MnmG-rel"/>
</dbReference>
<dbReference type="InterPro" id="IPR040131">
    <property type="entry name" value="MnmG_N"/>
</dbReference>
<dbReference type="InterPro" id="IPR004417">
    <property type="entry name" value="TrmFO"/>
</dbReference>
<dbReference type="NCBIfam" id="TIGR00137">
    <property type="entry name" value="gid_trmFO"/>
    <property type="match status" value="1"/>
</dbReference>
<dbReference type="NCBIfam" id="NF003739">
    <property type="entry name" value="PRK05335.1"/>
    <property type="match status" value="1"/>
</dbReference>
<dbReference type="PANTHER" id="PTHR11806">
    <property type="entry name" value="GLUCOSE INHIBITED DIVISION PROTEIN A"/>
    <property type="match status" value="1"/>
</dbReference>
<dbReference type="PANTHER" id="PTHR11806:SF2">
    <property type="entry name" value="METHYLENETETRAHYDROFOLATE--TRNA-(URACIL-5-)-METHYLTRANSFERASE TRMFO"/>
    <property type="match status" value="1"/>
</dbReference>
<dbReference type="Pfam" id="PF01134">
    <property type="entry name" value="GIDA"/>
    <property type="match status" value="1"/>
</dbReference>
<dbReference type="SUPFAM" id="SSF51905">
    <property type="entry name" value="FAD/NAD(P)-binding domain"/>
    <property type="match status" value="1"/>
</dbReference>
<accession>Q55692</accession>
<feature type="chain" id="PRO_0000117283" description="Methylenetetrahydrofolate--tRNA-(uracil-5-)-methyltransferase TrmFO">
    <location>
        <begin position="1"/>
        <end position="456"/>
    </location>
</feature>
<feature type="binding site" evidence="1">
    <location>
        <begin position="11"/>
        <end position="16"/>
    </location>
    <ligand>
        <name>FAD</name>
        <dbReference type="ChEBI" id="CHEBI:57692"/>
    </ligand>
</feature>
<gene>
    <name evidence="1" type="primary">trmFO</name>
    <name type="synonym">gid</name>
    <name type="ordered locus">sll0204</name>
</gene>
<reference key="1">
    <citation type="journal article" date="1995" name="DNA Res.">
        <title>Sequence analysis of the genome of the unicellular cyanobacterium Synechocystis sp. strain PCC6803. I. Sequence features in the 1 Mb region from map positions 64% to 92% of the genome.</title>
        <authorList>
            <person name="Kaneko T."/>
            <person name="Tanaka A."/>
            <person name="Sato S."/>
            <person name="Kotani H."/>
            <person name="Sazuka T."/>
            <person name="Miyajima N."/>
            <person name="Sugiura M."/>
            <person name="Tabata S."/>
        </authorList>
    </citation>
    <scope>NUCLEOTIDE SEQUENCE [LARGE SCALE GENOMIC DNA]</scope>
    <source>
        <strain>ATCC 27184 / PCC 6803 / N-1</strain>
    </source>
</reference>
<reference key="2">
    <citation type="journal article" date="1996" name="DNA Res.">
        <title>Sequence analysis of the genome of the unicellular cyanobacterium Synechocystis sp. strain PCC6803. II. Sequence determination of the entire genome and assignment of potential protein-coding regions.</title>
        <authorList>
            <person name="Kaneko T."/>
            <person name="Sato S."/>
            <person name="Kotani H."/>
            <person name="Tanaka A."/>
            <person name="Asamizu E."/>
            <person name="Nakamura Y."/>
            <person name="Miyajima N."/>
            <person name="Hirosawa M."/>
            <person name="Sugiura M."/>
            <person name="Sasamoto S."/>
            <person name="Kimura T."/>
            <person name="Hosouchi T."/>
            <person name="Matsuno A."/>
            <person name="Muraki A."/>
            <person name="Nakazaki N."/>
            <person name="Naruo K."/>
            <person name="Okumura S."/>
            <person name="Shimpo S."/>
            <person name="Takeuchi C."/>
            <person name="Wada T."/>
            <person name="Watanabe A."/>
            <person name="Yamada M."/>
            <person name="Yasuda M."/>
            <person name="Tabata S."/>
        </authorList>
    </citation>
    <scope>NUCLEOTIDE SEQUENCE [LARGE SCALE GENOMIC DNA]</scope>
    <source>
        <strain>ATCC 27184 / PCC 6803 / Kazusa</strain>
    </source>
</reference>
<evidence type="ECO:0000255" key="1">
    <source>
        <dbReference type="HAMAP-Rule" id="MF_01037"/>
    </source>
</evidence>
<proteinExistence type="inferred from homology"/>
<comment type="function">
    <text evidence="1">Catalyzes the folate-dependent formation of 5-methyl-uridine at position 54 (M-5-U54) in all tRNAs.</text>
</comment>
<comment type="catalytic activity">
    <reaction evidence="1">
        <text>uridine(54) in tRNA + (6R)-5,10-methylene-5,6,7,8-tetrahydrofolate + NADH + H(+) = 5-methyluridine(54) in tRNA + (6S)-5,6,7,8-tetrahydrofolate + NAD(+)</text>
        <dbReference type="Rhea" id="RHEA:16873"/>
        <dbReference type="Rhea" id="RHEA-COMP:10167"/>
        <dbReference type="Rhea" id="RHEA-COMP:10193"/>
        <dbReference type="ChEBI" id="CHEBI:15378"/>
        <dbReference type="ChEBI" id="CHEBI:15636"/>
        <dbReference type="ChEBI" id="CHEBI:57453"/>
        <dbReference type="ChEBI" id="CHEBI:57540"/>
        <dbReference type="ChEBI" id="CHEBI:57945"/>
        <dbReference type="ChEBI" id="CHEBI:65315"/>
        <dbReference type="ChEBI" id="CHEBI:74447"/>
        <dbReference type="EC" id="2.1.1.74"/>
    </reaction>
</comment>
<comment type="catalytic activity">
    <reaction evidence="1">
        <text>uridine(54) in tRNA + (6R)-5,10-methylene-5,6,7,8-tetrahydrofolate + NADPH + H(+) = 5-methyluridine(54) in tRNA + (6S)-5,6,7,8-tetrahydrofolate + NADP(+)</text>
        <dbReference type="Rhea" id="RHEA:62372"/>
        <dbReference type="Rhea" id="RHEA-COMP:10167"/>
        <dbReference type="Rhea" id="RHEA-COMP:10193"/>
        <dbReference type="ChEBI" id="CHEBI:15378"/>
        <dbReference type="ChEBI" id="CHEBI:15636"/>
        <dbReference type="ChEBI" id="CHEBI:57453"/>
        <dbReference type="ChEBI" id="CHEBI:57783"/>
        <dbReference type="ChEBI" id="CHEBI:58349"/>
        <dbReference type="ChEBI" id="CHEBI:65315"/>
        <dbReference type="ChEBI" id="CHEBI:74447"/>
        <dbReference type="EC" id="2.1.1.74"/>
    </reaction>
</comment>
<comment type="cofactor">
    <cofactor evidence="1">
        <name>FAD</name>
        <dbReference type="ChEBI" id="CHEBI:57692"/>
    </cofactor>
</comment>
<comment type="subcellular location">
    <subcellularLocation>
        <location evidence="1">Cytoplasm</location>
    </subcellularLocation>
</comment>
<comment type="similarity">
    <text evidence="1">Belongs to the MnmG family. TrmFO subfamily.</text>
</comment>
<organism>
    <name type="scientific">Synechocystis sp. (strain ATCC 27184 / PCC 6803 / Kazusa)</name>
    <dbReference type="NCBI Taxonomy" id="1111708"/>
    <lineage>
        <taxon>Bacteria</taxon>
        <taxon>Bacillati</taxon>
        <taxon>Cyanobacteriota</taxon>
        <taxon>Cyanophyceae</taxon>
        <taxon>Synechococcales</taxon>
        <taxon>Merismopediaceae</taxon>
        <taxon>Synechocystis</taxon>
    </lineage>
</organism>
<protein>
    <recommendedName>
        <fullName evidence="1">Methylenetetrahydrofolate--tRNA-(uracil-5-)-methyltransferase TrmFO</fullName>
        <ecNumber evidence="1">2.1.1.74</ecNumber>
    </recommendedName>
    <alternativeName>
        <fullName evidence="1">Folate-dependent tRNA (uracil-5-)-methyltransferase</fullName>
    </alternativeName>
    <alternativeName>
        <fullName evidence="1">Folate-dependent tRNA(M-5-U54)-methyltransferase</fullName>
    </alternativeName>
</protein>
<sequence>MTTLTPIHVIGGGLAGTEAAWQIAQAGVPVILTEMRPERLSPAHHSEDLAELVCSNSFGAKAGDRAAGLLQTELRQLSSLIITTADRHAVPAGGALAVDRGIFSRSLTEQVASHPLVELRRGEVTEIPREGITVLTTGPLTSPALTEDLQQFTGMEYLSFFDAASPIVVGDSINKEVAFFASRYDKGEAAYLNCPFNREQYFNFWQALCEAEQAPLKDFDRETAKFFEGCLPIEELAQRGEDTMRYGPLKPVGLFDARLGDFRDPANKEKKPYAVVQLRQEDKAGQLWNMVGFQTNLRWGEQGRVFRLIPGLENAEFVRMGVMHRNTFINSPQLLTASLHFGDRQTLFAAGQLVGTEGYAAATAGGWLAGTNAARLALGLPLLTLPATTMMGALFNFISSASPKHFQPMPPNFGILPELPQRIRNKQERYGQYRDRALADLTTWQTSIKSLATCRV</sequence>
<keyword id="KW-0963">Cytoplasm</keyword>
<keyword id="KW-0274">FAD</keyword>
<keyword id="KW-0285">Flavoprotein</keyword>
<keyword id="KW-0489">Methyltransferase</keyword>
<keyword id="KW-0520">NAD</keyword>
<keyword id="KW-0521">NADP</keyword>
<keyword id="KW-1185">Reference proteome</keyword>
<keyword id="KW-0808">Transferase</keyword>
<keyword id="KW-0819">tRNA processing</keyword>